<keyword id="KW-0145">Chemotaxis</keyword>
<keyword id="KW-0963">Cytoplasm</keyword>
<keyword id="KW-0378">Hydrolase</keyword>
<keyword id="KW-0597">Phosphoprotein</keyword>
<keyword id="KW-1185">Reference proteome</keyword>
<proteinExistence type="inferred from homology"/>
<evidence type="ECO:0000255" key="1">
    <source>
        <dbReference type="HAMAP-Rule" id="MF_00099"/>
    </source>
</evidence>
<comment type="function">
    <text evidence="1">Involved in chemotaxis. Part of a chemotaxis signal transduction system that modulates chemotaxis in response to various stimuli. Catalyzes the demethylation of specific methylglutamate residues introduced into the chemoreceptors (methyl-accepting chemotaxis proteins or MCP) by CheR. Also mediates the irreversible deamidation of specific glutamine residues to glutamic acid.</text>
</comment>
<comment type="catalytic activity">
    <reaction evidence="1">
        <text>[protein]-L-glutamate 5-O-methyl ester + H2O = L-glutamyl-[protein] + methanol + H(+)</text>
        <dbReference type="Rhea" id="RHEA:23236"/>
        <dbReference type="Rhea" id="RHEA-COMP:10208"/>
        <dbReference type="Rhea" id="RHEA-COMP:10311"/>
        <dbReference type="ChEBI" id="CHEBI:15377"/>
        <dbReference type="ChEBI" id="CHEBI:15378"/>
        <dbReference type="ChEBI" id="CHEBI:17790"/>
        <dbReference type="ChEBI" id="CHEBI:29973"/>
        <dbReference type="ChEBI" id="CHEBI:82795"/>
        <dbReference type="EC" id="3.1.1.61"/>
    </reaction>
</comment>
<comment type="catalytic activity">
    <reaction evidence="1">
        <text>L-glutaminyl-[protein] + H2O = L-glutamyl-[protein] + NH4(+)</text>
        <dbReference type="Rhea" id="RHEA:16441"/>
        <dbReference type="Rhea" id="RHEA-COMP:10207"/>
        <dbReference type="Rhea" id="RHEA-COMP:10208"/>
        <dbReference type="ChEBI" id="CHEBI:15377"/>
        <dbReference type="ChEBI" id="CHEBI:28938"/>
        <dbReference type="ChEBI" id="CHEBI:29973"/>
        <dbReference type="ChEBI" id="CHEBI:30011"/>
        <dbReference type="EC" id="3.5.1.44"/>
    </reaction>
</comment>
<comment type="subcellular location">
    <subcellularLocation>
        <location evidence="1">Cytoplasm</location>
    </subcellularLocation>
</comment>
<comment type="domain">
    <text evidence="1">Contains a C-terminal catalytic domain, and an N-terminal region which modulates catalytic activity.</text>
</comment>
<comment type="PTM">
    <text evidence="1">Phosphorylated by CheA. Phosphorylation of the N-terminal regulatory domain activates the methylesterase activity.</text>
</comment>
<comment type="similarity">
    <text evidence="1">Belongs to the CheB family.</text>
</comment>
<accession>Q8F6P9</accession>
<name>CHEB1_LEPIN</name>
<sequence>MIPNPVRAVIIDDSLLVRNIISDQIQKDSKIHVVATGKTGMDCIDLAQKMNPDVIILDVEMPVMDGLTALHELQKKKLGIPVIMLSVLTQNGAEATFKALEYGAIDFVPKPSSVFQFDPEEIGNILKSKILAYFESKIQIPSQNLLKKAPAYSKVPAGSHLKKSPIQAICIGTSTGGPRALQEVFSRIPADISLPILVVQHMPAGFTKAFATRLNDHAKIKVKEAEDGEPIEPNTGYVAPGDAHLSIQSKGGRKWIALNREAPVNGHRPSIEVLLDSAIEEYKSGIIGVIMTGMGKDGSAAIVRVREIGGSTIAQDEQTSVIYGMNRQAVEMGGVEYIEPVTEIINRIQIILKERGI</sequence>
<organism>
    <name type="scientific">Leptospira interrogans serogroup Icterohaemorrhagiae serovar Lai (strain 56601)</name>
    <dbReference type="NCBI Taxonomy" id="189518"/>
    <lineage>
        <taxon>Bacteria</taxon>
        <taxon>Pseudomonadati</taxon>
        <taxon>Spirochaetota</taxon>
        <taxon>Spirochaetia</taxon>
        <taxon>Leptospirales</taxon>
        <taxon>Leptospiraceae</taxon>
        <taxon>Leptospira</taxon>
    </lineage>
</organism>
<feature type="chain" id="PRO_0000158002" description="Protein-glutamate methylesterase/protein-glutamine glutaminase 1">
    <location>
        <begin position="1"/>
        <end position="357"/>
    </location>
</feature>
<feature type="domain" description="Response regulatory" evidence="1">
    <location>
        <begin position="7"/>
        <end position="125"/>
    </location>
</feature>
<feature type="domain" description="CheB-type methylesterase" evidence="1">
    <location>
        <begin position="162"/>
        <end position="344"/>
    </location>
</feature>
<feature type="active site" evidence="1">
    <location>
        <position position="174"/>
    </location>
</feature>
<feature type="active site" evidence="1">
    <location>
        <position position="201"/>
    </location>
</feature>
<feature type="active site" evidence="1">
    <location>
        <position position="297"/>
    </location>
</feature>
<feature type="modified residue" description="4-aspartylphosphate" evidence="1">
    <location>
        <position position="58"/>
    </location>
</feature>
<protein>
    <recommendedName>
        <fullName evidence="1">Protein-glutamate methylesterase/protein-glutamine glutaminase 1</fullName>
        <ecNumber evidence="1">3.1.1.61</ecNumber>
        <ecNumber evidence="1">3.5.1.44</ecNumber>
    </recommendedName>
</protein>
<reference key="1">
    <citation type="journal article" date="2003" name="Nature">
        <title>Unique physiological and pathogenic features of Leptospira interrogans revealed by whole-genome sequencing.</title>
        <authorList>
            <person name="Ren S.-X."/>
            <person name="Fu G."/>
            <person name="Jiang X.-G."/>
            <person name="Zeng R."/>
            <person name="Miao Y.-G."/>
            <person name="Xu H."/>
            <person name="Zhang Y.-X."/>
            <person name="Xiong H."/>
            <person name="Lu G."/>
            <person name="Lu L.-F."/>
            <person name="Jiang H.-Q."/>
            <person name="Jia J."/>
            <person name="Tu Y.-F."/>
            <person name="Jiang J.-X."/>
            <person name="Gu W.-Y."/>
            <person name="Zhang Y.-Q."/>
            <person name="Cai Z."/>
            <person name="Sheng H.-H."/>
            <person name="Yin H.-F."/>
            <person name="Zhang Y."/>
            <person name="Zhu G.-F."/>
            <person name="Wan M."/>
            <person name="Huang H.-L."/>
            <person name="Qian Z."/>
            <person name="Wang S.-Y."/>
            <person name="Ma W."/>
            <person name="Yao Z.-J."/>
            <person name="Shen Y."/>
            <person name="Qiang B.-Q."/>
            <person name="Xia Q.-C."/>
            <person name="Guo X.-K."/>
            <person name="Danchin A."/>
            <person name="Saint Girons I."/>
            <person name="Somerville R.L."/>
            <person name="Wen Y.-M."/>
            <person name="Shi M.-H."/>
            <person name="Chen Z."/>
            <person name="Xu J.-G."/>
            <person name="Zhao G.-P."/>
        </authorList>
    </citation>
    <scope>NUCLEOTIDE SEQUENCE [LARGE SCALE GENOMIC DNA]</scope>
    <source>
        <strain>56601</strain>
    </source>
</reference>
<gene>
    <name evidence="1" type="primary">cheB1</name>
    <name type="ordered locus">LA_1252</name>
</gene>
<dbReference type="EC" id="3.1.1.61" evidence="1"/>
<dbReference type="EC" id="3.5.1.44" evidence="1"/>
<dbReference type="EMBL" id="AE010300">
    <property type="protein sequence ID" value="AAN48451.1"/>
    <property type="molecule type" value="Genomic_DNA"/>
</dbReference>
<dbReference type="RefSeq" id="NP_711433.1">
    <property type="nucleotide sequence ID" value="NC_004342.2"/>
</dbReference>
<dbReference type="RefSeq" id="WP_000612786.1">
    <property type="nucleotide sequence ID" value="NC_004342.2"/>
</dbReference>
<dbReference type="SMR" id="Q8F6P9"/>
<dbReference type="STRING" id="189518.LA_1252"/>
<dbReference type="PaxDb" id="189518-LA_1252"/>
<dbReference type="EnsemblBacteria" id="AAN48451">
    <property type="protein sequence ID" value="AAN48451"/>
    <property type="gene ID" value="LA_1252"/>
</dbReference>
<dbReference type="KEGG" id="lil:LA_1252"/>
<dbReference type="PATRIC" id="fig|189518.3.peg.1253"/>
<dbReference type="HOGENOM" id="CLU_000445_51_0_12"/>
<dbReference type="InParanoid" id="Q8F6P9"/>
<dbReference type="OrthoDB" id="9793421at2"/>
<dbReference type="Proteomes" id="UP000001408">
    <property type="component" value="Chromosome I"/>
</dbReference>
<dbReference type="GO" id="GO:0005737">
    <property type="term" value="C:cytoplasm"/>
    <property type="evidence" value="ECO:0007669"/>
    <property type="project" value="UniProtKB-SubCell"/>
</dbReference>
<dbReference type="GO" id="GO:0000156">
    <property type="term" value="F:phosphorelay response regulator activity"/>
    <property type="evidence" value="ECO:0007669"/>
    <property type="project" value="InterPro"/>
</dbReference>
<dbReference type="GO" id="GO:0008984">
    <property type="term" value="F:protein-glutamate methylesterase activity"/>
    <property type="evidence" value="ECO:0007669"/>
    <property type="project" value="UniProtKB-UniRule"/>
</dbReference>
<dbReference type="GO" id="GO:0050568">
    <property type="term" value="F:protein-glutamine glutaminase activity"/>
    <property type="evidence" value="ECO:0007669"/>
    <property type="project" value="UniProtKB-UniRule"/>
</dbReference>
<dbReference type="GO" id="GO:0006935">
    <property type="term" value="P:chemotaxis"/>
    <property type="evidence" value="ECO:0007669"/>
    <property type="project" value="UniProtKB-UniRule"/>
</dbReference>
<dbReference type="CDD" id="cd16432">
    <property type="entry name" value="CheB_Rec"/>
    <property type="match status" value="1"/>
</dbReference>
<dbReference type="CDD" id="cd17541">
    <property type="entry name" value="REC_CheB-like"/>
    <property type="match status" value="1"/>
</dbReference>
<dbReference type="Gene3D" id="3.40.50.2300">
    <property type="match status" value="1"/>
</dbReference>
<dbReference type="Gene3D" id="3.40.50.180">
    <property type="entry name" value="Methylesterase CheB, C-terminal domain"/>
    <property type="match status" value="1"/>
</dbReference>
<dbReference type="HAMAP" id="MF_00099">
    <property type="entry name" value="CheB_chemtxs"/>
    <property type="match status" value="1"/>
</dbReference>
<dbReference type="InterPro" id="IPR008248">
    <property type="entry name" value="CheB-like"/>
</dbReference>
<dbReference type="InterPro" id="IPR035909">
    <property type="entry name" value="CheB_C"/>
</dbReference>
<dbReference type="InterPro" id="IPR011006">
    <property type="entry name" value="CheY-like_superfamily"/>
</dbReference>
<dbReference type="InterPro" id="IPR000673">
    <property type="entry name" value="Sig_transdc_resp-reg_Me-estase"/>
</dbReference>
<dbReference type="InterPro" id="IPR001789">
    <property type="entry name" value="Sig_transdc_resp-reg_receiver"/>
</dbReference>
<dbReference type="NCBIfam" id="NF001965">
    <property type="entry name" value="PRK00742.1"/>
    <property type="match status" value="1"/>
</dbReference>
<dbReference type="PANTHER" id="PTHR42872">
    <property type="entry name" value="PROTEIN-GLUTAMATE METHYLESTERASE/PROTEIN-GLUTAMINE GLUTAMINASE"/>
    <property type="match status" value="1"/>
</dbReference>
<dbReference type="PANTHER" id="PTHR42872:SF3">
    <property type="entry name" value="PROTEIN-GLUTAMATE METHYLESTERASE_PROTEIN-GLUTAMINE GLUTAMINASE 1"/>
    <property type="match status" value="1"/>
</dbReference>
<dbReference type="Pfam" id="PF01339">
    <property type="entry name" value="CheB_methylest"/>
    <property type="match status" value="1"/>
</dbReference>
<dbReference type="Pfam" id="PF00072">
    <property type="entry name" value="Response_reg"/>
    <property type="match status" value="1"/>
</dbReference>
<dbReference type="PIRSF" id="PIRSF000876">
    <property type="entry name" value="RR_chemtxs_CheB"/>
    <property type="match status" value="1"/>
</dbReference>
<dbReference type="SMART" id="SM00448">
    <property type="entry name" value="REC"/>
    <property type="match status" value="1"/>
</dbReference>
<dbReference type="SUPFAM" id="SSF52172">
    <property type="entry name" value="CheY-like"/>
    <property type="match status" value="1"/>
</dbReference>
<dbReference type="SUPFAM" id="SSF52738">
    <property type="entry name" value="Methylesterase CheB, C-terminal domain"/>
    <property type="match status" value="1"/>
</dbReference>
<dbReference type="PROSITE" id="PS50122">
    <property type="entry name" value="CHEB"/>
    <property type="match status" value="1"/>
</dbReference>
<dbReference type="PROSITE" id="PS50110">
    <property type="entry name" value="RESPONSE_REGULATORY"/>
    <property type="match status" value="1"/>
</dbReference>